<feature type="chain" id="PRO_1000192522" description="NAD kinase">
    <location>
        <begin position="1"/>
        <end position="272"/>
    </location>
</feature>
<feature type="active site" description="Proton acceptor" evidence="1">
    <location>
        <position position="50"/>
    </location>
</feature>
<feature type="binding site" evidence="1">
    <location>
        <begin position="50"/>
        <end position="51"/>
    </location>
    <ligand>
        <name>NAD(+)</name>
        <dbReference type="ChEBI" id="CHEBI:57540"/>
    </ligand>
</feature>
<feature type="binding site" evidence="1">
    <location>
        <begin position="126"/>
        <end position="127"/>
    </location>
    <ligand>
        <name>NAD(+)</name>
        <dbReference type="ChEBI" id="CHEBI:57540"/>
    </ligand>
</feature>
<feature type="binding site" evidence="1">
    <location>
        <position position="152"/>
    </location>
    <ligand>
        <name>NAD(+)</name>
        <dbReference type="ChEBI" id="CHEBI:57540"/>
    </ligand>
</feature>
<feature type="binding site" evidence="1">
    <location>
        <position position="154"/>
    </location>
    <ligand>
        <name>NAD(+)</name>
        <dbReference type="ChEBI" id="CHEBI:57540"/>
    </ligand>
</feature>
<feature type="binding site" evidence="1">
    <location>
        <begin position="165"/>
        <end position="170"/>
    </location>
    <ligand>
        <name>NAD(+)</name>
        <dbReference type="ChEBI" id="CHEBI:57540"/>
    </ligand>
</feature>
<feature type="binding site" evidence="1">
    <location>
        <position position="189"/>
    </location>
    <ligand>
        <name>NAD(+)</name>
        <dbReference type="ChEBI" id="CHEBI:57540"/>
    </ligand>
</feature>
<keyword id="KW-0067">ATP-binding</keyword>
<keyword id="KW-0963">Cytoplasm</keyword>
<keyword id="KW-0418">Kinase</keyword>
<keyword id="KW-0520">NAD</keyword>
<keyword id="KW-0521">NADP</keyword>
<keyword id="KW-0547">Nucleotide-binding</keyword>
<keyword id="KW-0808">Transferase</keyword>
<organism>
    <name type="scientific">Streptococcus pneumoniae (strain ATCC 700669 / Spain 23F-1)</name>
    <dbReference type="NCBI Taxonomy" id="561276"/>
    <lineage>
        <taxon>Bacteria</taxon>
        <taxon>Bacillati</taxon>
        <taxon>Bacillota</taxon>
        <taxon>Bacilli</taxon>
        <taxon>Lactobacillales</taxon>
        <taxon>Streptococcaceae</taxon>
        <taxon>Streptococcus</taxon>
    </lineage>
</organism>
<comment type="function">
    <text evidence="1">Involved in the regulation of the intracellular balance of NAD and NADP, and is a key enzyme in the biosynthesis of NADP. Catalyzes specifically the phosphorylation on 2'-hydroxyl of the adenosine moiety of NAD to yield NADP.</text>
</comment>
<comment type="catalytic activity">
    <reaction evidence="1">
        <text>NAD(+) + ATP = ADP + NADP(+) + H(+)</text>
        <dbReference type="Rhea" id="RHEA:18629"/>
        <dbReference type="ChEBI" id="CHEBI:15378"/>
        <dbReference type="ChEBI" id="CHEBI:30616"/>
        <dbReference type="ChEBI" id="CHEBI:57540"/>
        <dbReference type="ChEBI" id="CHEBI:58349"/>
        <dbReference type="ChEBI" id="CHEBI:456216"/>
        <dbReference type="EC" id="2.7.1.23"/>
    </reaction>
</comment>
<comment type="cofactor">
    <cofactor evidence="1">
        <name>a divalent metal cation</name>
        <dbReference type="ChEBI" id="CHEBI:60240"/>
    </cofactor>
</comment>
<comment type="subcellular location">
    <subcellularLocation>
        <location evidence="1">Cytoplasm</location>
    </subcellularLocation>
</comment>
<comment type="similarity">
    <text evidence="1">Belongs to the NAD kinase family.</text>
</comment>
<sequence length="272" mass="31005">MKNTGKRIDLIANRKPQSQRVLYELRDRLKRNQFILNDTNPDIVISIGGDGMLLSAFHKYENQLEKVRFIGLHTGHLGFYTDYRDFELDKLVTNLQLDTGARVSYPVLNVKVFLENGEVKIFRALNEASIRRSDRTMVADIVINGVPFERFRGDGLTVSTPTGSTAYNKSLGGAVLHPTIEALQLTEIASLNNRVYRTLGSSIIVPKKDKIELIPTRNDYHTISVDNSVYSFRNIERIEYQIAHHKIHFVATPSHTSFWNRVKDAFIGEVDE</sequence>
<proteinExistence type="inferred from homology"/>
<evidence type="ECO:0000255" key="1">
    <source>
        <dbReference type="HAMAP-Rule" id="MF_00361"/>
    </source>
</evidence>
<gene>
    <name evidence="1" type="primary">nadK</name>
    <name type="ordered locus">SPN23F10180</name>
</gene>
<dbReference type="EC" id="2.7.1.23" evidence="1"/>
<dbReference type="EMBL" id="FM211187">
    <property type="protein sequence ID" value="CAR68841.1"/>
    <property type="molecule type" value="Genomic_DNA"/>
</dbReference>
<dbReference type="RefSeq" id="WP_000799059.1">
    <property type="nucleotide sequence ID" value="NC_011900.1"/>
</dbReference>
<dbReference type="SMR" id="B8ZPU4"/>
<dbReference type="KEGG" id="sne:SPN23F10180"/>
<dbReference type="HOGENOM" id="CLU_008831_0_3_9"/>
<dbReference type="GO" id="GO:0005737">
    <property type="term" value="C:cytoplasm"/>
    <property type="evidence" value="ECO:0007669"/>
    <property type="project" value="UniProtKB-SubCell"/>
</dbReference>
<dbReference type="GO" id="GO:0005524">
    <property type="term" value="F:ATP binding"/>
    <property type="evidence" value="ECO:0007669"/>
    <property type="project" value="UniProtKB-KW"/>
</dbReference>
<dbReference type="GO" id="GO:0046872">
    <property type="term" value="F:metal ion binding"/>
    <property type="evidence" value="ECO:0007669"/>
    <property type="project" value="UniProtKB-UniRule"/>
</dbReference>
<dbReference type="GO" id="GO:0051287">
    <property type="term" value="F:NAD binding"/>
    <property type="evidence" value="ECO:0007669"/>
    <property type="project" value="UniProtKB-ARBA"/>
</dbReference>
<dbReference type="GO" id="GO:0003951">
    <property type="term" value="F:NAD+ kinase activity"/>
    <property type="evidence" value="ECO:0007669"/>
    <property type="project" value="UniProtKB-UniRule"/>
</dbReference>
<dbReference type="GO" id="GO:0019674">
    <property type="term" value="P:NAD metabolic process"/>
    <property type="evidence" value="ECO:0007669"/>
    <property type="project" value="InterPro"/>
</dbReference>
<dbReference type="GO" id="GO:0006741">
    <property type="term" value="P:NADP biosynthetic process"/>
    <property type="evidence" value="ECO:0007669"/>
    <property type="project" value="UniProtKB-UniRule"/>
</dbReference>
<dbReference type="FunFam" id="2.60.200.30:FF:000002">
    <property type="entry name" value="NAD kinase"/>
    <property type="match status" value="1"/>
</dbReference>
<dbReference type="Gene3D" id="3.40.50.10330">
    <property type="entry name" value="Probable inorganic polyphosphate/atp-NAD kinase, domain 1"/>
    <property type="match status" value="1"/>
</dbReference>
<dbReference type="Gene3D" id="2.60.200.30">
    <property type="entry name" value="Probable inorganic polyphosphate/atp-NAD kinase, domain 2"/>
    <property type="match status" value="1"/>
</dbReference>
<dbReference type="HAMAP" id="MF_00361">
    <property type="entry name" value="NAD_kinase"/>
    <property type="match status" value="1"/>
</dbReference>
<dbReference type="InterPro" id="IPR017438">
    <property type="entry name" value="ATP-NAD_kinase_N"/>
</dbReference>
<dbReference type="InterPro" id="IPR017437">
    <property type="entry name" value="ATP-NAD_kinase_PpnK-typ_C"/>
</dbReference>
<dbReference type="InterPro" id="IPR016064">
    <property type="entry name" value="NAD/diacylglycerol_kinase_sf"/>
</dbReference>
<dbReference type="InterPro" id="IPR002504">
    <property type="entry name" value="NADK"/>
</dbReference>
<dbReference type="NCBIfam" id="NF003424">
    <property type="entry name" value="PRK04885.1"/>
    <property type="match status" value="1"/>
</dbReference>
<dbReference type="PANTHER" id="PTHR20275">
    <property type="entry name" value="NAD KINASE"/>
    <property type="match status" value="1"/>
</dbReference>
<dbReference type="PANTHER" id="PTHR20275:SF0">
    <property type="entry name" value="NAD KINASE"/>
    <property type="match status" value="1"/>
</dbReference>
<dbReference type="Pfam" id="PF20143">
    <property type="entry name" value="NAD_kinase_C"/>
    <property type="match status" value="1"/>
</dbReference>
<dbReference type="SUPFAM" id="SSF111331">
    <property type="entry name" value="NAD kinase/diacylglycerol kinase-like"/>
    <property type="match status" value="1"/>
</dbReference>
<protein>
    <recommendedName>
        <fullName evidence="1">NAD kinase</fullName>
        <ecNumber evidence="1">2.7.1.23</ecNumber>
    </recommendedName>
    <alternativeName>
        <fullName evidence="1">ATP-dependent NAD kinase</fullName>
    </alternativeName>
</protein>
<name>NADK_STRPJ</name>
<reference key="1">
    <citation type="journal article" date="2009" name="J. Bacteriol.">
        <title>Role of conjugative elements in the evolution of the multidrug-resistant pandemic clone Streptococcus pneumoniae Spain23F ST81.</title>
        <authorList>
            <person name="Croucher N.J."/>
            <person name="Walker D."/>
            <person name="Romero P."/>
            <person name="Lennard N."/>
            <person name="Paterson G.K."/>
            <person name="Bason N.C."/>
            <person name="Mitchell A.M."/>
            <person name="Quail M.A."/>
            <person name="Andrew P.W."/>
            <person name="Parkhill J."/>
            <person name="Bentley S.D."/>
            <person name="Mitchell T.J."/>
        </authorList>
    </citation>
    <scope>NUCLEOTIDE SEQUENCE [LARGE SCALE GENOMIC DNA]</scope>
    <source>
        <strain>ATCC 700669 / Spain 23F-1</strain>
    </source>
</reference>
<accession>B8ZPU4</accession>